<feature type="chain" id="PRO_0000200938" description="Uncharacterized protein y4qC">
    <location>
        <begin position="1"/>
        <end position="583"/>
    </location>
</feature>
<reference key="1">
    <citation type="journal article" date="1997" name="Nature">
        <title>Molecular basis of symbiosis between Rhizobium and legumes.</title>
        <authorList>
            <person name="Freiberg C.A."/>
            <person name="Fellay R."/>
            <person name="Bairoch A."/>
            <person name="Broughton W.J."/>
            <person name="Rosenthal A."/>
            <person name="Perret X."/>
        </authorList>
    </citation>
    <scope>NUCLEOTIDE SEQUENCE [LARGE SCALE GENOMIC DNA]</scope>
    <source>
        <strain>NBRC 101917 / NGR234</strain>
    </source>
</reference>
<reference key="2">
    <citation type="journal article" date="2009" name="Appl. Environ. Microbiol.">
        <title>Rhizobium sp. strain NGR234 possesses a remarkable number of secretion systems.</title>
        <authorList>
            <person name="Schmeisser C."/>
            <person name="Liesegang H."/>
            <person name="Krysciak D."/>
            <person name="Bakkou N."/>
            <person name="Le Quere A."/>
            <person name="Wollherr A."/>
            <person name="Heinemeyer I."/>
            <person name="Morgenstern B."/>
            <person name="Pommerening-Roeser A."/>
            <person name="Flores M."/>
            <person name="Palacios R."/>
            <person name="Brenner S."/>
            <person name="Gottschalk G."/>
            <person name="Schmitz R.A."/>
            <person name="Broughton W.J."/>
            <person name="Perret X."/>
            <person name="Strittmatter A.W."/>
            <person name="Streit W.R."/>
        </authorList>
    </citation>
    <scope>NUCLEOTIDE SEQUENCE [LARGE SCALE GENOMIC DNA]</scope>
    <source>
        <strain>NBRC 101917 / NGR234</strain>
    </source>
</reference>
<sequence length="583" mass="63587">MKPYTDFEPPPALAVTPAGRRRLAELQKLHSAAGESLLVDEEAAAAGILRIEFSWPLNDGRTIGLRAVYPDTFPRLRPHVFLTCDPSEYPERHCGSEGALCLLGRDTRYWQANMSLAELLDENLAHVLDGTGAEDPQGEPIEYWWNSLGQASGSFVLVDSRWKLSGYDEGTVDVLVNASRTEIGRTIRAAILSVRAGDGSLLGERVAPLPAAVSSTAIRAFPWRRDDQLSLPTGSAEQTVGKVAYGKTYVTCDGADIRLSFTISRTELQHNEHGDAWVCGMAVREHISHSSRRGPRRKDTVPSIVPVFRDGEIDIGYRVPSVASLRGKRIAVVGLGALGSPAAVELARNGCTSLHLMDDDVVEPGNTIRWELGASSWGTKKQDALKRFIEREFPWTSVLAVPHRIGLPNCDPHIPGETDRLNELLDSVDLVVDASAAPGVTYLLGDICRERGLSLISVFASPNLHGGAVVFHHPESGCPVCMAHANETPEGKSGHIPYPNGMNDESTLVQPPGCSELTFTGASFDLKELSLETVRMAVDVLSSPDEWTVSEVRTVNLHNVKRRMPPSWRIDPLERHPDCGCRS</sequence>
<geneLocation type="plasmid">
    <name>sym pNGR234a</name>
</geneLocation>
<keyword id="KW-0614">Plasmid</keyword>
<keyword id="KW-1185">Reference proteome</keyword>
<name>Y4QC_SINFN</name>
<organism>
    <name type="scientific">Sinorhizobium fredii (strain NBRC 101917 / NGR234)</name>
    <dbReference type="NCBI Taxonomy" id="394"/>
    <lineage>
        <taxon>Bacteria</taxon>
        <taxon>Pseudomonadati</taxon>
        <taxon>Pseudomonadota</taxon>
        <taxon>Alphaproteobacteria</taxon>
        <taxon>Hyphomicrobiales</taxon>
        <taxon>Rhizobiaceae</taxon>
        <taxon>Sinorhizobium/Ensifer group</taxon>
        <taxon>Sinorhizobium</taxon>
    </lineage>
</organism>
<accession>P55624</accession>
<proteinExistence type="predicted"/>
<gene>
    <name type="ordered locus">NGR_a01950</name>
    <name type="ORF">y4qC</name>
</gene>
<dbReference type="EMBL" id="U00090">
    <property type="protein sequence ID" value="AAB91827.1"/>
    <property type="molecule type" value="Genomic_DNA"/>
</dbReference>
<dbReference type="RefSeq" id="NP_444030.1">
    <property type="nucleotide sequence ID" value="NC_000914.2"/>
</dbReference>
<dbReference type="RefSeq" id="WP_010875229.1">
    <property type="nucleotide sequence ID" value="NC_000914.2"/>
</dbReference>
<dbReference type="SMR" id="P55624"/>
<dbReference type="KEGG" id="rhi:NGR_a01950"/>
<dbReference type="PATRIC" id="fig|394.7.peg.196"/>
<dbReference type="eggNOG" id="COG0476">
    <property type="taxonomic scope" value="Bacteria"/>
</dbReference>
<dbReference type="HOGENOM" id="CLU_467590_0_0_5"/>
<dbReference type="OrthoDB" id="9804150at2"/>
<dbReference type="Proteomes" id="UP000001054">
    <property type="component" value="Plasmid pNGR234a"/>
</dbReference>
<dbReference type="GO" id="GO:0061503">
    <property type="term" value="F:tRNA threonylcarbamoyladenosine dehydratase"/>
    <property type="evidence" value="ECO:0007669"/>
    <property type="project" value="TreeGrafter"/>
</dbReference>
<dbReference type="GO" id="GO:0008641">
    <property type="term" value="F:ubiquitin-like modifier activating enzyme activity"/>
    <property type="evidence" value="ECO:0007669"/>
    <property type="project" value="InterPro"/>
</dbReference>
<dbReference type="GO" id="GO:0061504">
    <property type="term" value="P:cyclic threonylcarbamoyladenosine biosynthetic process"/>
    <property type="evidence" value="ECO:0007669"/>
    <property type="project" value="TreeGrafter"/>
</dbReference>
<dbReference type="CDD" id="cd01483">
    <property type="entry name" value="E1_enzyme_family"/>
    <property type="match status" value="1"/>
</dbReference>
<dbReference type="Gene3D" id="3.40.50.720">
    <property type="entry name" value="NAD(P)-binding Rossmann-like Domain"/>
    <property type="match status" value="1"/>
</dbReference>
<dbReference type="InterPro" id="IPR045886">
    <property type="entry name" value="ThiF/MoeB/HesA"/>
</dbReference>
<dbReference type="InterPro" id="IPR000594">
    <property type="entry name" value="ThiF_NAD_FAD-bd"/>
</dbReference>
<dbReference type="InterPro" id="IPR035985">
    <property type="entry name" value="Ubiquitin-activating_enz"/>
</dbReference>
<dbReference type="PANTHER" id="PTHR43267:SF3">
    <property type="entry name" value="THIF PROTEIN"/>
    <property type="match status" value="1"/>
</dbReference>
<dbReference type="PANTHER" id="PTHR43267">
    <property type="entry name" value="TRNA THREONYLCARBAMOYLADENOSINE DEHYDRATASE"/>
    <property type="match status" value="1"/>
</dbReference>
<dbReference type="Pfam" id="PF00899">
    <property type="entry name" value="ThiF"/>
    <property type="match status" value="1"/>
</dbReference>
<dbReference type="SUPFAM" id="SSF69572">
    <property type="entry name" value="Activating enzymes of the ubiquitin-like proteins"/>
    <property type="match status" value="1"/>
</dbReference>
<protein>
    <recommendedName>
        <fullName>Uncharacterized protein y4qC</fullName>
    </recommendedName>
</protein>